<gene>
    <name evidence="1" type="primary">nuoB</name>
    <name type="ordered locus">RHA1_ro05910</name>
</gene>
<comment type="function">
    <text evidence="1">NDH-1 shuttles electrons from NADH, via FMN and iron-sulfur (Fe-S) centers, to quinones in the respiratory chain. The immediate electron acceptor for the enzyme in this species is believed to be a menaquinone. Couples the redox reaction to proton translocation (for every two electrons transferred, four hydrogen ions are translocated across the cytoplasmic membrane), and thus conserves the redox energy in a proton gradient.</text>
</comment>
<comment type="catalytic activity">
    <reaction evidence="1">
        <text>a quinone + NADH + 5 H(+)(in) = a quinol + NAD(+) + 4 H(+)(out)</text>
        <dbReference type="Rhea" id="RHEA:57888"/>
        <dbReference type="ChEBI" id="CHEBI:15378"/>
        <dbReference type="ChEBI" id="CHEBI:24646"/>
        <dbReference type="ChEBI" id="CHEBI:57540"/>
        <dbReference type="ChEBI" id="CHEBI:57945"/>
        <dbReference type="ChEBI" id="CHEBI:132124"/>
    </reaction>
</comment>
<comment type="cofactor">
    <cofactor evidence="1">
        <name>[4Fe-4S] cluster</name>
        <dbReference type="ChEBI" id="CHEBI:49883"/>
    </cofactor>
    <text evidence="1">Binds 1 [4Fe-4S] cluster.</text>
</comment>
<comment type="subunit">
    <text evidence="1">NDH-1 is composed of 14 different subunits. Subunits NuoB, C, D, E, F, and G constitute the peripheral sector of the complex.</text>
</comment>
<comment type="subcellular location">
    <subcellularLocation>
        <location evidence="1">Cell membrane</location>
        <topology evidence="1">Peripheral membrane protein</topology>
        <orientation evidence="1">Cytoplasmic side</orientation>
    </subcellularLocation>
</comment>
<comment type="similarity">
    <text evidence="1">Belongs to the complex I 20 kDa subunit family.</text>
</comment>
<evidence type="ECO:0000255" key="1">
    <source>
        <dbReference type="HAMAP-Rule" id="MF_01356"/>
    </source>
</evidence>
<keyword id="KW-0004">4Fe-4S</keyword>
<keyword id="KW-1003">Cell membrane</keyword>
<keyword id="KW-0408">Iron</keyword>
<keyword id="KW-0411">Iron-sulfur</keyword>
<keyword id="KW-0472">Membrane</keyword>
<keyword id="KW-0479">Metal-binding</keyword>
<keyword id="KW-0520">NAD</keyword>
<keyword id="KW-0874">Quinone</keyword>
<keyword id="KW-1278">Translocase</keyword>
<keyword id="KW-0813">Transport</keyword>
<proteinExistence type="inferred from homology"/>
<organism>
    <name type="scientific">Rhodococcus jostii (strain RHA1)</name>
    <dbReference type="NCBI Taxonomy" id="101510"/>
    <lineage>
        <taxon>Bacteria</taxon>
        <taxon>Bacillati</taxon>
        <taxon>Actinomycetota</taxon>
        <taxon>Actinomycetes</taxon>
        <taxon>Mycobacteriales</taxon>
        <taxon>Nocardiaceae</taxon>
        <taxon>Rhodococcus</taxon>
    </lineage>
</organism>
<protein>
    <recommendedName>
        <fullName evidence="1">NADH-quinone oxidoreductase subunit B</fullName>
        <ecNumber evidence="1">7.1.1.-</ecNumber>
    </recommendedName>
    <alternativeName>
        <fullName evidence="1">NADH dehydrogenase I subunit B</fullName>
    </alternativeName>
    <alternativeName>
        <fullName evidence="1">NDH-1 subunit B</fullName>
    </alternativeName>
</protein>
<dbReference type="EC" id="7.1.1.-" evidence="1"/>
<dbReference type="EMBL" id="CP000431">
    <property type="protein sequence ID" value="ABG97687.1"/>
    <property type="molecule type" value="Genomic_DNA"/>
</dbReference>
<dbReference type="RefSeq" id="WP_005239105.1">
    <property type="nucleotide sequence ID" value="NC_008268.1"/>
</dbReference>
<dbReference type="SMR" id="Q0S449"/>
<dbReference type="KEGG" id="rha:RHA1_ro05910"/>
<dbReference type="eggNOG" id="COG0377">
    <property type="taxonomic scope" value="Bacteria"/>
</dbReference>
<dbReference type="HOGENOM" id="CLU_055737_7_3_11"/>
<dbReference type="OrthoDB" id="9786737at2"/>
<dbReference type="Proteomes" id="UP000008710">
    <property type="component" value="Chromosome"/>
</dbReference>
<dbReference type="GO" id="GO:0005886">
    <property type="term" value="C:plasma membrane"/>
    <property type="evidence" value="ECO:0007669"/>
    <property type="project" value="UniProtKB-SubCell"/>
</dbReference>
<dbReference type="GO" id="GO:0045271">
    <property type="term" value="C:respiratory chain complex I"/>
    <property type="evidence" value="ECO:0007669"/>
    <property type="project" value="TreeGrafter"/>
</dbReference>
<dbReference type="GO" id="GO:0051539">
    <property type="term" value="F:4 iron, 4 sulfur cluster binding"/>
    <property type="evidence" value="ECO:0007669"/>
    <property type="project" value="UniProtKB-KW"/>
</dbReference>
<dbReference type="GO" id="GO:0005506">
    <property type="term" value="F:iron ion binding"/>
    <property type="evidence" value="ECO:0007669"/>
    <property type="project" value="UniProtKB-UniRule"/>
</dbReference>
<dbReference type="GO" id="GO:0008137">
    <property type="term" value="F:NADH dehydrogenase (ubiquinone) activity"/>
    <property type="evidence" value="ECO:0007669"/>
    <property type="project" value="InterPro"/>
</dbReference>
<dbReference type="GO" id="GO:0050136">
    <property type="term" value="F:NADH:ubiquinone reductase (non-electrogenic) activity"/>
    <property type="evidence" value="ECO:0007669"/>
    <property type="project" value="UniProtKB-UniRule"/>
</dbReference>
<dbReference type="GO" id="GO:0048038">
    <property type="term" value="F:quinone binding"/>
    <property type="evidence" value="ECO:0007669"/>
    <property type="project" value="UniProtKB-KW"/>
</dbReference>
<dbReference type="GO" id="GO:0009060">
    <property type="term" value="P:aerobic respiration"/>
    <property type="evidence" value="ECO:0007669"/>
    <property type="project" value="TreeGrafter"/>
</dbReference>
<dbReference type="GO" id="GO:0015990">
    <property type="term" value="P:electron transport coupled proton transport"/>
    <property type="evidence" value="ECO:0007669"/>
    <property type="project" value="TreeGrafter"/>
</dbReference>
<dbReference type="FunFam" id="3.40.50.12280:FF:000004">
    <property type="entry name" value="NADH-quinone oxidoreductase subunit B"/>
    <property type="match status" value="1"/>
</dbReference>
<dbReference type="Gene3D" id="3.40.50.12280">
    <property type="match status" value="1"/>
</dbReference>
<dbReference type="HAMAP" id="MF_01356">
    <property type="entry name" value="NDH1_NuoB"/>
    <property type="match status" value="1"/>
</dbReference>
<dbReference type="InterPro" id="IPR006137">
    <property type="entry name" value="NADH_UbQ_OxRdtase-like_20kDa"/>
</dbReference>
<dbReference type="InterPro" id="IPR006138">
    <property type="entry name" value="NADH_UQ_OxRdtase_20Kd_su"/>
</dbReference>
<dbReference type="NCBIfam" id="TIGR01957">
    <property type="entry name" value="nuoB_fam"/>
    <property type="match status" value="1"/>
</dbReference>
<dbReference type="NCBIfam" id="NF005012">
    <property type="entry name" value="PRK06411.1"/>
    <property type="match status" value="1"/>
</dbReference>
<dbReference type="PANTHER" id="PTHR11995">
    <property type="entry name" value="NADH DEHYDROGENASE"/>
    <property type="match status" value="1"/>
</dbReference>
<dbReference type="PANTHER" id="PTHR11995:SF14">
    <property type="entry name" value="NADH DEHYDROGENASE [UBIQUINONE] IRON-SULFUR PROTEIN 7, MITOCHONDRIAL"/>
    <property type="match status" value="1"/>
</dbReference>
<dbReference type="Pfam" id="PF01058">
    <property type="entry name" value="Oxidored_q6"/>
    <property type="match status" value="1"/>
</dbReference>
<dbReference type="SUPFAM" id="SSF56770">
    <property type="entry name" value="HydA/Nqo6-like"/>
    <property type="match status" value="1"/>
</dbReference>
<dbReference type="PROSITE" id="PS01150">
    <property type="entry name" value="COMPLEX1_20K"/>
    <property type="match status" value="1"/>
</dbReference>
<sequence>MGIEEKLPSGFLLTTVEGLAGYVRKGSLWPASFGLACCAIEMMATAGGRFDIARFGMEAFRASPRQADLMIVAGRVSQKMAPVLRQIYDQMVEPKWVLAMGVCASSGGMFNNYAIVQGVDHIVPVDIYLPGCPPRPEMLLNAILTLHEKIQQMPLGVHREEVARAAEQAALAATPTIQMKGLLR</sequence>
<reference key="1">
    <citation type="journal article" date="2006" name="Proc. Natl. Acad. Sci. U.S.A.">
        <title>The complete genome of Rhodococcus sp. RHA1 provides insights into a catabolic powerhouse.</title>
        <authorList>
            <person name="McLeod M.P."/>
            <person name="Warren R.L."/>
            <person name="Hsiao W.W.L."/>
            <person name="Araki N."/>
            <person name="Myhre M."/>
            <person name="Fernandes C."/>
            <person name="Miyazawa D."/>
            <person name="Wong W."/>
            <person name="Lillquist A.L."/>
            <person name="Wang D."/>
            <person name="Dosanjh M."/>
            <person name="Hara H."/>
            <person name="Petrescu A."/>
            <person name="Morin R.D."/>
            <person name="Yang G."/>
            <person name="Stott J.M."/>
            <person name="Schein J.E."/>
            <person name="Shin H."/>
            <person name="Smailus D."/>
            <person name="Siddiqui A.S."/>
            <person name="Marra M.A."/>
            <person name="Jones S.J.M."/>
            <person name="Holt R."/>
            <person name="Brinkman F.S.L."/>
            <person name="Miyauchi K."/>
            <person name="Fukuda M."/>
            <person name="Davies J.E."/>
            <person name="Mohn W.W."/>
            <person name="Eltis L.D."/>
        </authorList>
    </citation>
    <scope>NUCLEOTIDE SEQUENCE [LARGE SCALE GENOMIC DNA]</scope>
    <source>
        <strain>RHA1</strain>
    </source>
</reference>
<feature type="chain" id="PRO_1000166663" description="NADH-quinone oxidoreductase subunit B">
    <location>
        <begin position="1"/>
        <end position="184"/>
    </location>
</feature>
<feature type="binding site" evidence="1">
    <location>
        <position position="37"/>
    </location>
    <ligand>
        <name>[4Fe-4S] cluster</name>
        <dbReference type="ChEBI" id="CHEBI:49883"/>
    </ligand>
</feature>
<feature type="binding site" evidence="1">
    <location>
        <position position="38"/>
    </location>
    <ligand>
        <name>[4Fe-4S] cluster</name>
        <dbReference type="ChEBI" id="CHEBI:49883"/>
    </ligand>
</feature>
<feature type="binding site" evidence="1">
    <location>
        <position position="103"/>
    </location>
    <ligand>
        <name>[4Fe-4S] cluster</name>
        <dbReference type="ChEBI" id="CHEBI:49883"/>
    </ligand>
</feature>
<feature type="binding site" evidence="1">
    <location>
        <position position="132"/>
    </location>
    <ligand>
        <name>[4Fe-4S] cluster</name>
        <dbReference type="ChEBI" id="CHEBI:49883"/>
    </ligand>
</feature>
<name>NUOB_RHOJR</name>
<accession>Q0S449</accession>